<reference key="1">
    <citation type="journal article" date="2006" name="Mol. Genet. Genomics">
        <title>The chloroplast genome of Nicotiana sylvestris and Nicotiana tomentosiformis: complete sequencing confirms that the Nicotiana sylvestris progenitor is the maternal genome donor of Nicotiana tabacum.</title>
        <authorList>
            <person name="Yukawa M."/>
            <person name="Tsudzuki T."/>
            <person name="Sugiura M."/>
        </authorList>
    </citation>
    <scope>NUCLEOTIDE SEQUENCE [LARGE SCALE GENOMIC DNA]</scope>
</reference>
<accession>Q3C1N7</accession>
<organism>
    <name type="scientific">Nicotiana sylvestris</name>
    <name type="common">Wood tobacco</name>
    <name type="synonym">South American tobacco</name>
    <dbReference type="NCBI Taxonomy" id="4096"/>
    <lineage>
        <taxon>Eukaryota</taxon>
        <taxon>Viridiplantae</taxon>
        <taxon>Streptophyta</taxon>
        <taxon>Embryophyta</taxon>
        <taxon>Tracheophyta</taxon>
        <taxon>Spermatophyta</taxon>
        <taxon>Magnoliopsida</taxon>
        <taxon>eudicotyledons</taxon>
        <taxon>Gunneridae</taxon>
        <taxon>Pentapetalae</taxon>
        <taxon>asterids</taxon>
        <taxon>lamiids</taxon>
        <taxon>Solanales</taxon>
        <taxon>Solanaceae</taxon>
        <taxon>Nicotianoideae</taxon>
        <taxon>Nicotianeae</taxon>
        <taxon>Nicotiana</taxon>
    </lineage>
</organism>
<name>RR19_NICSY</name>
<geneLocation type="chloroplast"/>
<keyword id="KW-0150">Chloroplast</keyword>
<keyword id="KW-0934">Plastid</keyword>
<keyword id="KW-1185">Reference proteome</keyword>
<keyword id="KW-0687">Ribonucleoprotein</keyword>
<keyword id="KW-0689">Ribosomal protein</keyword>
<keyword id="KW-0694">RNA-binding</keyword>
<keyword id="KW-0699">rRNA-binding</keyword>
<proteinExistence type="inferred from homology"/>
<evidence type="ECO:0000255" key="1">
    <source>
        <dbReference type="HAMAP-Rule" id="MF_00531"/>
    </source>
</evidence>
<evidence type="ECO:0000305" key="2"/>
<comment type="function">
    <text evidence="1">Protein S19 forms a complex with S13 that binds strongly to the 16S ribosomal RNA.</text>
</comment>
<comment type="subcellular location">
    <subcellularLocation>
        <location>Plastid</location>
        <location>Chloroplast</location>
    </subcellularLocation>
</comment>
<comment type="similarity">
    <text evidence="1">Belongs to the universal ribosomal protein uS19 family.</text>
</comment>
<sequence length="92" mass="10443">MTRSLKKNPFVANHLLKKIDKLNTKAEKEIIVTWSRASTIIPTMIGHTIAIHNGKEHLPIYITDSMVGHKLGEFAPTLNFRGHAKSDNRSRR</sequence>
<protein>
    <recommendedName>
        <fullName evidence="1">Small ribosomal subunit protein uS19c</fullName>
    </recommendedName>
    <alternativeName>
        <fullName evidence="2">30S ribosomal protein S19, chloroplastic</fullName>
    </alternativeName>
</protein>
<gene>
    <name evidence="1" type="primary">rps19</name>
</gene>
<feature type="chain" id="PRO_0000276914" description="Small ribosomal subunit protein uS19c">
    <location>
        <begin position="1"/>
        <end position="92"/>
    </location>
</feature>
<dbReference type="EMBL" id="AB237912">
    <property type="protein sequence ID" value="BAE46695.1"/>
    <property type="molecule type" value="Genomic_DNA"/>
</dbReference>
<dbReference type="RefSeq" id="YP_358719.1">
    <property type="nucleotide sequence ID" value="NC_007500.1"/>
</dbReference>
<dbReference type="SMR" id="Q3C1N7"/>
<dbReference type="GeneID" id="3735194"/>
<dbReference type="KEGG" id="nsy:3735194"/>
<dbReference type="OrthoDB" id="18397at4085"/>
<dbReference type="Proteomes" id="UP000189701">
    <property type="component" value="Chloroplast Pltd"/>
</dbReference>
<dbReference type="GO" id="GO:0009507">
    <property type="term" value="C:chloroplast"/>
    <property type="evidence" value="ECO:0007669"/>
    <property type="project" value="UniProtKB-SubCell"/>
</dbReference>
<dbReference type="GO" id="GO:0005763">
    <property type="term" value="C:mitochondrial small ribosomal subunit"/>
    <property type="evidence" value="ECO:0007669"/>
    <property type="project" value="TreeGrafter"/>
</dbReference>
<dbReference type="GO" id="GO:0019843">
    <property type="term" value="F:rRNA binding"/>
    <property type="evidence" value="ECO:0007669"/>
    <property type="project" value="UniProtKB-UniRule"/>
</dbReference>
<dbReference type="GO" id="GO:0003735">
    <property type="term" value="F:structural constituent of ribosome"/>
    <property type="evidence" value="ECO:0007669"/>
    <property type="project" value="InterPro"/>
</dbReference>
<dbReference type="GO" id="GO:0000028">
    <property type="term" value="P:ribosomal small subunit assembly"/>
    <property type="evidence" value="ECO:0007669"/>
    <property type="project" value="TreeGrafter"/>
</dbReference>
<dbReference type="GO" id="GO:0006412">
    <property type="term" value="P:translation"/>
    <property type="evidence" value="ECO:0007669"/>
    <property type="project" value="UniProtKB-UniRule"/>
</dbReference>
<dbReference type="FunFam" id="3.30.860.10:FF:000001">
    <property type="entry name" value="30S ribosomal protein S19"/>
    <property type="match status" value="1"/>
</dbReference>
<dbReference type="Gene3D" id="3.30.860.10">
    <property type="entry name" value="30s Ribosomal Protein S19, Chain A"/>
    <property type="match status" value="1"/>
</dbReference>
<dbReference type="HAMAP" id="MF_00531">
    <property type="entry name" value="Ribosomal_uS19"/>
    <property type="match status" value="1"/>
</dbReference>
<dbReference type="InterPro" id="IPR002222">
    <property type="entry name" value="Ribosomal_uS19"/>
</dbReference>
<dbReference type="InterPro" id="IPR005732">
    <property type="entry name" value="Ribosomal_uS19_bac-type"/>
</dbReference>
<dbReference type="InterPro" id="IPR020934">
    <property type="entry name" value="Ribosomal_uS19_CS"/>
</dbReference>
<dbReference type="InterPro" id="IPR023575">
    <property type="entry name" value="Ribosomal_uS19_SF"/>
</dbReference>
<dbReference type="NCBIfam" id="TIGR01050">
    <property type="entry name" value="rpsS_bact"/>
    <property type="match status" value="1"/>
</dbReference>
<dbReference type="PANTHER" id="PTHR11880">
    <property type="entry name" value="RIBOSOMAL PROTEIN S19P FAMILY MEMBER"/>
    <property type="match status" value="1"/>
</dbReference>
<dbReference type="PANTHER" id="PTHR11880:SF8">
    <property type="entry name" value="SMALL RIBOSOMAL SUBUNIT PROTEIN US19M"/>
    <property type="match status" value="1"/>
</dbReference>
<dbReference type="Pfam" id="PF00203">
    <property type="entry name" value="Ribosomal_S19"/>
    <property type="match status" value="1"/>
</dbReference>
<dbReference type="PIRSF" id="PIRSF002144">
    <property type="entry name" value="Ribosomal_S19"/>
    <property type="match status" value="1"/>
</dbReference>
<dbReference type="PRINTS" id="PR00975">
    <property type="entry name" value="RIBOSOMALS19"/>
</dbReference>
<dbReference type="SUPFAM" id="SSF54570">
    <property type="entry name" value="Ribosomal protein S19"/>
    <property type="match status" value="1"/>
</dbReference>
<dbReference type="PROSITE" id="PS00323">
    <property type="entry name" value="RIBOSOMAL_S19"/>
    <property type="match status" value="1"/>
</dbReference>